<comment type="function">
    <text evidence="1">Thiolesterase that catalyzes the hydrolysis of S-D-lactoyl-glutathione to form glutathione and D-lactic acid.</text>
</comment>
<comment type="catalytic activity">
    <reaction evidence="1">
        <text>an S-(2-hydroxyacyl)glutathione + H2O = a 2-hydroxy carboxylate + glutathione + H(+)</text>
        <dbReference type="Rhea" id="RHEA:21864"/>
        <dbReference type="ChEBI" id="CHEBI:15377"/>
        <dbReference type="ChEBI" id="CHEBI:15378"/>
        <dbReference type="ChEBI" id="CHEBI:57925"/>
        <dbReference type="ChEBI" id="CHEBI:58896"/>
        <dbReference type="ChEBI" id="CHEBI:71261"/>
        <dbReference type="EC" id="3.1.2.6"/>
    </reaction>
</comment>
<comment type="cofactor">
    <cofactor evidence="1">
        <name>Zn(2+)</name>
        <dbReference type="ChEBI" id="CHEBI:29105"/>
    </cofactor>
    <text evidence="1">Binds 2 Zn(2+) ions per subunit.</text>
</comment>
<comment type="pathway">
    <text evidence="1">Secondary metabolite metabolism; methylglyoxal degradation; (R)-lactate from methylglyoxal: step 2/2.</text>
</comment>
<comment type="subunit">
    <text evidence="1">Monomer.</text>
</comment>
<comment type="similarity">
    <text evidence="1">Belongs to the metallo-beta-lactamase superfamily. Glyoxalase II family.</text>
</comment>
<sequence>MDLIGLPTLQDNYIWLLINPQHQCLIVDPGVAAPVLHYLTENRITPKAILLTHHHNDHVGGVAEIVQAYPEMPVYGPAETQGQGCTQVVADNDTLSLLGCQISIMALPGHTLGHMAYYSAPYLFCGDTLFSAGCGRLFEGSAQQMFDSLQRIIQLPDNTLVCCAHEYTESNLRFARHVLPKNREIETYQQHVTILRAKQQPTVPSTLRIEMEINPFLRCYDYDLQRNVGFPTQPNEIWRVFACLRNMKDSF</sequence>
<organism>
    <name type="scientific">Edwardsiella ictaluri (strain 93-146)</name>
    <dbReference type="NCBI Taxonomy" id="634503"/>
    <lineage>
        <taxon>Bacteria</taxon>
        <taxon>Pseudomonadati</taxon>
        <taxon>Pseudomonadota</taxon>
        <taxon>Gammaproteobacteria</taxon>
        <taxon>Enterobacterales</taxon>
        <taxon>Hafniaceae</taxon>
        <taxon>Edwardsiella</taxon>
    </lineage>
</organism>
<keyword id="KW-0378">Hydrolase</keyword>
<keyword id="KW-0479">Metal-binding</keyword>
<keyword id="KW-0862">Zinc</keyword>
<proteinExistence type="inferred from homology"/>
<feature type="chain" id="PRO_1000215084" description="Hydroxyacylglutathione hydrolase">
    <location>
        <begin position="1"/>
        <end position="251"/>
    </location>
</feature>
<feature type="binding site" evidence="1">
    <location>
        <position position="53"/>
    </location>
    <ligand>
        <name>Zn(2+)</name>
        <dbReference type="ChEBI" id="CHEBI:29105"/>
        <label>1</label>
    </ligand>
</feature>
<feature type="binding site" evidence="1">
    <location>
        <position position="55"/>
    </location>
    <ligand>
        <name>Zn(2+)</name>
        <dbReference type="ChEBI" id="CHEBI:29105"/>
        <label>1</label>
    </ligand>
</feature>
<feature type="binding site" evidence="1">
    <location>
        <position position="57"/>
    </location>
    <ligand>
        <name>Zn(2+)</name>
        <dbReference type="ChEBI" id="CHEBI:29105"/>
        <label>2</label>
    </ligand>
</feature>
<feature type="binding site" evidence="1">
    <location>
        <position position="58"/>
    </location>
    <ligand>
        <name>Zn(2+)</name>
        <dbReference type="ChEBI" id="CHEBI:29105"/>
        <label>2</label>
    </ligand>
</feature>
<feature type="binding site" evidence="1">
    <location>
        <position position="110"/>
    </location>
    <ligand>
        <name>Zn(2+)</name>
        <dbReference type="ChEBI" id="CHEBI:29105"/>
        <label>1</label>
    </ligand>
</feature>
<feature type="binding site" evidence="1">
    <location>
        <position position="127"/>
    </location>
    <ligand>
        <name>Zn(2+)</name>
        <dbReference type="ChEBI" id="CHEBI:29105"/>
        <label>1</label>
    </ligand>
</feature>
<feature type="binding site" evidence="1">
    <location>
        <position position="127"/>
    </location>
    <ligand>
        <name>Zn(2+)</name>
        <dbReference type="ChEBI" id="CHEBI:29105"/>
        <label>2</label>
    </ligand>
</feature>
<feature type="binding site" evidence="1">
    <location>
        <position position="165"/>
    </location>
    <ligand>
        <name>Zn(2+)</name>
        <dbReference type="ChEBI" id="CHEBI:29105"/>
        <label>2</label>
    </ligand>
</feature>
<evidence type="ECO:0000255" key="1">
    <source>
        <dbReference type="HAMAP-Rule" id="MF_01374"/>
    </source>
</evidence>
<gene>
    <name evidence="1" type="primary">gloB</name>
    <name type="ordered locus">NT01EI_3196</name>
</gene>
<protein>
    <recommendedName>
        <fullName evidence="1">Hydroxyacylglutathione hydrolase</fullName>
        <ecNumber evidence="1">3.1.2.6</ecNumber>
    </recommendedName>
    <alternativeName>
        <fullName evidence="1">Glyoxalase II</fullName>
        <shortName evidence="1">Glx II</shortName>
    </alternativeName>
</protein>
<dbReference type="EC" id="3.1.2.6" evidence="1"/>
<dbReference type="EMBL" id="CP001600">
    <property type="protein sequence ID" value="ACR70345.1"/>
    <property type="molecule type" value="Genomic_DNA"/>
</dbReference>
<dbReference type="RefSeq" id="WP_015872432.1">
    <property type="nucleotide sequence ID" value="NZ_CP169062.1"/>
</dbReference>
<dbReference type="SMR" id="C5BEP2"/>
<dbReference type="STRING" id="67780.B6E78_07630"/>
<dbReference type="GeneID" id="69540064"/>
<dbReference type="KEGG" id="eic:NT01EI_3196"/>
<dbReference type="PATRIC" id="fig|634503.3.peg.2856"/>
<dbReference type="HOGENOM" id="CLU_030571_4_1_6"/>
<dbReference type="OrthoDB" id="9802248at2"/>
<dbReference type="UniPathway" id="UPA00619">
    <property type="reaction ID" value="UER00676"/>
</dbReference>
<dbReference type="Proteomes" id="UP000001485">
    <property type="component" value="Chromosome"/>
</dbReference>
<dbReference type="GO" id="GO:0004416">
    <property type="term" value="F:hydroxyacylglutathione hydrolase activity"/>
    <property type="evidence" value="ECO:0007669"/>
    <property type="project" value="UniProtKB-UniRule"/>
</dbReference>
<dbReference type="GO" id="GO:0046872">
    <property type="term" value="F:metal ion binding"/>
    <property type="evidence" value="ECO:0007669"/>
    <property type="project" value="UniProtKB-KW"/>
</dbReference>
<dbReference type="GO" id="GO:0019243">
    <property type="term" value="P:methylglyoxal catabolic process to D-lactate via S-lactoyl-glutathione"/>
    <property type="evidence" value="ECO:0007669"/>
    <property type="project" value="InterPro"/>
</dbReference>
<dbReference type="CDD" id="cd07723">
    <property type="entry name" value="hydroxyacylglutathione_hydrolase_MBL-fold"/>
    <property type="match status" value="1"/>
</dbReference>
<dbReference type="Gene3D" id="3.60.15.10">
    <property type="entry name" value="Ribonuclease Z/Hydroxyacylglutathione hydrolase-like"/>
    <property type="match status" value="1"/>
</dbReference>
<dbReference type="HAMAP" id="MF_01374">
    <property type="entry name" value="Glyoxalase_2"/>
    <property type="match status" value="1"/>
</dbReference>
<dbReference type="InterPro" id="IPR035680">
    <property type="entry name" value="Clx_II_MBL"/>
</dbReference>
<dbReference type="InterPro" id="IPR050110">
    <property type="entry name" value="Glyoxalase_II_hydrolase"/>
</dbReference>
<dbReference type="InterPro" id="IPR032282">
    <property type="entry name" value="HAGH_C"/>
</dbReference>
<dbReference type="InterPro" id="IPR017782">
    <property type="entry name" value="Hydroxyacylglutathione_Hdrlase"/>
</dbReference>
<dbReference type="InterPro" id="IPR001279">
    <property type="entry name" value="Metallo-B-lactamas"/>
</dbReference>
<dbReference type="InterPro" id="IPR036866">
    <property type="entry name" value="RibonucZ/Hydroxyglut_hydro"/>
</dbReference>
<dbReference type="NCBIfam" id="TIGR03413">
    <property type="entry name" value="GSH_gloB"/>
    <property type="match status" value="1"/>
</dbReference>
<dbReference type="PANTHER" id="PTHR43705">
    <property type="entry name" value="HYDROXYACYLGLUTATHIONE HYDROLASE"/>
    <property type="match status" value="1"/>
</dbReference>
<dbReference type="PANTHER" id="PTHR43705:SF1">
    <property type="entry name" value="HYDROXYACYLGLUTATHIONE HYDROLASE GLOB"/>
    <property type="match status" value="1"/>
</dbReference>
<dbReference type="Pfam" id="PF16123">
    <property type="entry name" value="HAGH_C"/>
    <property type="match status" value="1"/>
</dbReference>
<dbReference type="Pfam" id="PF00753">
    <property type="entry name" value="Lactamase_B"/>
    <property type="match status" value="2"/>
</dbReference>
<dbReference type="PIRSF" id="PIRSF005457">
    <property type="entry name" value="Glx"/>
    <property type="match status" value="1"/>
</dbReference>
<dbReference type="SMART" id="SM00849">
    <property type="entry name" value="Lactamase_B"/>
    <property type="match status" value="1"/>
</dbReference>
<dbReference type="SUPFAM" id="SSF56281">
    <property type="entry name" value="Metallo-hydrolase/oxidoreductase"/>
    <property type="match status" value="1"/>
</dbReference>
<name>GLO2_EDWI9</name>
<reference key="1">
    <citation type="submission" date="2009-03" db="EMBL/GenBank/DDBJ databases">
        <title>Complete genome sequence of Edwardsiella ictaluri 93-146.</title>
        <authorList>
            <person name="Williams M.L."/>
            <person name="Gillaspy A.F."/>
            <person name="Dyer D.W."/>
            <person name="Thune R.L."/>
            <person name="Waldbieser G.C."/>
            <person name="Schuster S.C."/>
            <person name="Gipson J."/>
            <person name="Zaitshik J."/>
            <person name="Landry C."/>
            <person name="Lawrence M.L."/>
        </authorList>
    </citation>
    <scope>NUCLEOTIDE SEQUENCE [LARGE SCALE GENOMIC DNA]</scope>
    <source>
        <strain>93-146</strain>
    </source>
</reference>
<accession>C5BEP2</accession>